<protein>
    <recommendedName>
        <fullName evidence="1">Large ribosomal subunit protein uL13</fullName>
    </recommendedName>
    <alternativeName>
        <fullName evidence="2">50S ribosomal protein L13</fullName>
    </alternativeName>
</protein>
<gene>
    <name evidence="1" type="primary">rplM</name>
    <name type="ordered locus">Mfl493</name>
</gene>
<proteinExistence type="inferred from homology"/>
<organism>
    <name type="scientific">Mesoplasma florum (strain ATCC 33453 / NBRC 100688 / NCTC 11704 / L1)</name>
    <name type="common">Acholeplasma florum</name>
    <dbReference type="NCBI Taxonomy" id="265311"/>
    <lineage>
        <taxon>Bacteria</taxon>
        <taxon>Bacillati</taxon>
        <taxon>Mycoplasmatota</taxon>
        <taxon>Mollicutes</taxon>
        <taxon>Entomoplasmatales</taxon>
        <taxon>Entomoplasmataceae</taxon>
        <taxon>Mesoplasma</taxon>
    </lineage>
</organism>
<feature type="chain" id="PRO_1000055406" description="Large ribosomal subunit protein uL13">
    <location>
        <begin position="1"/>
        <end position="150"/>
    </location>
</feature>
<keyword id="KW-1185">Reference proteome</keyword>
<keyword id="KW-0687">Ribonucleoprotein</keyword>
<keyword id="KW-0689">Ribosomal protein</keyword>
<name>RL13_MESFL</name>
<reference key="1">
    <citation type="submission" date="2004-06" db="EMBL/GenBank/DDBJ databases">
        <authorList>
            <person name="Birren B.W."/>
            <person name="Stange-Thomann N."/>
            <person name="Hafez N."/>
            <person name="DeCaprio D."/>
            <person name="Fisher S."/>
            <person name="Butler J."/>
            <person name="Elkins T."/>
            <person name="Kodira C.D."/>
            <person name="Major J."/>
            <person name="Wang S."/>
            <person name="Nicol R."/>
            <person name="Nusbaum C."/>
        </authorList>
    </citation>
    <scope>NUCLEOTIDE SEQUENCE [LARGE SCALE GENOMIC DNA]</scope>
    <source>
        <strain>ATCC 33453 / NBRC 100688 / NCTC 11704 / L1</strain>
    </source>
</reference>
<accession>Q6F0X2</accession>
<dbReference type="EMBL" id="AE017263">
    <property type="protein sequence ID" value="AAT75851.1"/>
    <property type="molecule type" value="Genomic_DNA"/>
</dbReference>
<dbReference type="RefSeq" id="WP_011183391.1">
    <property type="nucleotide sequence ID" value="NC_006055.1"/>
</dbReference>
<dbReference type="RefSeq" id="YP_053735.1">
    <property type="nucleotide sequence ID" value="NC_006055.1"/>
</dbReference>
<dbReference type="SMR" id="Q6F0X2"/>
<dbReference type="STRING" id="265311.Mfl493"/>
<dbReference type="PaxDb" id="265311-Mfl493"/>
<dbReference type="EnsemblBacteria" id="AAT75851">
    <property type="protein sequence ID" value="AAT75851"/>
    <property type="gene ID" value="Mfl493"/>
</dbReference>
<dbReference type="GeneID" id="2897881"/>
<dbReference type="KEGG" id="mfl:Mfl493"/>
<dbReference type="PATRIC" id="fig|265311.5.peg.499"/>
<dbReference type="eggNOG" id="COG0102">
    <property type="taxonomic scope" value="Bacteria"/>
</dbReference>
<dbReference type="HOGENOM" id="CLU_082184_2_2_14"/>
<dbReference type="OrthoDB" id="9801330at2"/>
<dbReference type="Proteomes" id="UP000006647">
    <property type="component" value="Chromosome"/>
</dbReference>
<dbReference type="GO" id="GO:0022625">
    <property type="term" value="C:cytosolic large ribosomal subunit"/>
    <property type="evidence" value="ECO:0007669"/>
    <property type="project" value="TreeGrafter"/>
</dbReference>
<dbReference type="GO" id="GO:0003729">
    <property type="term" value="F:mRNA binding"/>
    <property type="evidence" value="ECO:0007669"/>
    <property type="project" value="TreeGrafter"/>
</dbReference>
<dbReference type="GO" id="GO:0003735">
    <property type="term" value="F:structural constituent of ribosome"/>
    <property type="evidence" value="ECO:0007669"/>
    <property type="project" value="InterPro"/>
</dbReference>
<dbReference type="GO" id="GO:0017148">
    <property type="term" value="P:negative regulation of translation"/>
    <property type="evidence" value="ECO:0007669"/>
    <property type="project" value="TreeGrafter"/>
</dbReference>
<dbReference type="GO" id="GO:0006412">
    <property type="term" value="P:translation"/>
    <property type="evidence" value="ECO:0007669"/>
    <property type="project" value="UniProtKB-UniRule"/>
</dbReference>
<dbReference type="CDD" id="cd00392">
    <property type="entry name" value="Ribosomal_L13"/>
    <property type="match status" value="1"/>
</dbReference>
<dbReference type="Gene3D" id="3.90.1180.10">
    <property type="entry name" value="Ribosomal protein L13"/>
    <property type="match status" value="1"/>
</dbReference>
<dbReference type="HAMAP" id="MF_01366">
    <property type="entry name" value="Ribosomal_uL13"/>
    <property type="match status" value="1"/>
</dbReference>
<dbReference type="InterPro" id="IPR005822">
    <property type="entry name" value="Ribosomal_uL13"/>
</dbReference>
<dbReference type="InterPro" id="IPR005823">
    <property type="entry name" value="Ribosomal_uL13_bac-type"/>
</dbReference>
<dbReference type="InterPro" id="IPR036899">
    <property type="entry name" value="Ribosomal_uL13_sf"/>
</dbReference>
<dbReference type="NCBIfam" id="TIGR01066">
    <property type="entry name" value="rplM_bact"/>
    <property type="match status" value="1"/>
</dbReference>
<dbReference type="PANTHER" id="PTHR11545:SF2">
    <property type="entry name" value="LARGE RIBOSOMAL SUBUNIT PROTEIN UL13M"/>
    <property type="match status" value="1"/>
</dbReference>
<dbReference type="PANTHER" id="PTHR11545">
    <property type="entry name" value="RIBOSOMAL PROTEIN L13"/>
    <property type="match status" value="1"/>
</dbReference>
<dbReference type="Pfam" id="PF00572">
    <property type="entry name" value="Ribosomal_L13"/>
    <property type="match status" value="1"/>
</dbReference>
<dbReference type="PIRSF" id="PIRSF002181">
    <property type="entry name" value="Ribosomal_L13"/>
    <property type="match status" value="1"/>
</dbReference>
<dbReference type="SUPFAM" id="SSF52161">
    <property type="entry name" value="Ribosomal protein L13"/>
    <property type="match status" value="1"/>
</dbReference>
<evidence type="ECO:0000255" key="1">
    <source>
        <dbReference type="HAMAP-Rule" id="MF_01366"/>
    </source>
</evidence>
<evidence type="ECO:0000305" key="2"/>
<sequence>MKQTTLIAAKDIKKNWYIVDAAGQNVGRLSTEVARILRGKHKVDFTPHMNNGDHVIIINAEKVLFTGKKESDKTYYHHSMHPGGLRRRTVAVQRELDATKILERSIRLMLPKNVQGRNQFRALHVFVGENHPYAAQKPEVLTFVKKGDNK</sequence>
<comment type="function">
    <text evidence="1">This protein is one of the early assembly proteins of the 50S ribosomal subunit, although it is not seen to bind rRNA by itself. It is important during the early stages of 50S assembly.</text>
</comment>
<comment type="subunit">
    <text evidence="1">Part of the 50S ribosomal subunit.</text>
</comment>
<comment type="similarity">
    <text evidence="1">Belongs to the universal ribosomal protein uL13 family.</text>
</comment>